<name>GCSP_MOUSE</name>
<evidence type="ECO:0000250" key="1">
    <source>
        <dbReference type="UniProtKB" id="P15505"/>
    </source>
</evidence>
<evidence type="ECO:0000250" key="2">
    <source>
        <dbReference type="UniProtKB" id="P23378"/>
    </source>
</evidence>
<evidence type="ECO:0000255" key="3"/>
<evidence type="ECO:0000256" key="4">
    <source>
        <dbReference type="SAM" id="MobiDB-lite"/>
    </source>
</evidence>
<evidence type="ECO:0000305" key="5"/>
<evidence type="ECO:0000312" key="6">
    <source>
        <dbReference type="MGI" id="MGI:1341155"/>
    </source>
</evidence>
<evidence type="ECO:0007744" key="7">
    <source>
    </source>
</evidence>
<gene>
    <name evidence="6" type="primary">Gldc</name>
</gene>
<reference key="1">
    <citation type="journal article" date="2004" name="Genome Res.">
        <title>The status, quality, and expansion of the NIH full-length cDNA project: the Mammalian Gene Collection (MGC).</title>
        <authorList>
            <consortium name="The MGC Project Team"/>
        </authorList>
    </citation>
    <scope>NUCLEOTIDE SEQUENCE [LARGE SCALE MRNA]</scope>
    <source>
        <tissue>Eye</tissue>
        <tissue>Retina</tissue>
    </source>
</reference>
<reference key="2">
    <citation type="submission" date="2009-01" db="UniProtKB">
        <authorList>
            <person name="Lubec G."/>
            <person name="Sunyer B."/>
            <person name="Chen W.-Q."/>
        </authorList>
    </citation>
    <scope>PROTEIN SEQUENCE OF 278-287; 606-615; 878-888 AND 933-942</scope>
    <scope>IDENTIFICATION BY MASS SPECTROMETRY</scope>
    <source>
        <strain>OF1</strain>
        <tissue>Hippocampus</tissue>
    </source>
</reference>
<reference key="3">
    <citation type="journal article" date="2010" name="Cell">
        <title>A tissue-specific atlas of mouse protein phosphorylation and expression.</title>
        <authorList>
            <person name="Huttlin E.L."/>
            <person name="Jedrychowski M.P."/>
            <person name="Elias J.E."/>
            <person name="Goswami T."/>
            <person name="Rad R."/>
            <person name="Beausoleil S.A."/>
            <person name="Villen J."/>
            <person name="Haas W."/>
            <person name="Sowa M.E."/>
            <person name="Gygi S.P."/>
        </authorList>
    </citation>
    <scope>IDENTIFICATION BY MASS SPECTROMETRY [LARGE SCALE ANALYSIS]</scope>
    <source>
        <tissue>Brain</tissue>
        <tissue>Kidney</tissue>
        <tissue>Liver</tissue>
    </source>
</reference>
<reference key="4">
    <citation type="journal article" date="2013" name="Proc. Natl. Acad. Sci. U.S.A.">
        <title>Label-free quantitative proteomics of the lysine acetylome in mitochondria identifies substrates of SIRT3 in metabolic pathways.</title>
        <authorList>
            <person name="Rardin M.J."/>
            <person name="Newman J.C."/>
            <person name="Held J.M."/>
            <person name="Cusack M.P."/>
            <person name="Sorensen D.J."/>
            <person name="Li B."/>
            <person name="Schilling B."/>
            <person name="Mooney S.D."/>
            <person name="Kahn C.R."/>
            <person name="Verdin E."/>
            <person name="Gibson B.W."/>
        </authorList>
    </citation>
    <scope>ACETYLATION [LARGE SCALE ANALYSIS] AT LYS-452; LYS-519; LYS-653 AND LYS-669</scope>
    <scope>IDENTIFICATION BY MASS SPECTROMETRY [LARGE SCALE ANALYSIS]</scope>
    <source>
        <tissue>Liver</tissue>
    </source>
</reference>
<comment type="function">
    <text evidence="1">The glycine cleavage system catalyzes the degradation of glycine. The P protein (GLDC) binds the alpha-amino group of glycine through its pyridoxal phosphate cofactor; CO(2) is released and the remaining methylamine moiety is then transferred to the lipoamide cofactor of the H protein (GCSH) (By similarity).</text>
</comment>
<comment type="catalytic activity">
    <reaction evidence="1">
        <text>N(6)-[(R)-lipoyl]-L-lysyl-[glycine-cleavage complex H protein] + glycine + H(+) = N(6)-[(R)-S(8)-aminomethyldihydrolipoyl]-L-lysyl-[glycine-cleavage complex H protein] + CO2</text>
        <dbReference type="Rhea" id="RHEA:24304"/>
        <dbReference type="Rhea" id="RHEA-COMP:10494"/>
        <dbReference type="Rhea" id="RHEA-COMP:10495"/>
        <dbReference type="ChEBI" id="CHEBI:15378"/>
        <dbReference type="ChEBI" id="CHEBI:16526"/>
        <dbReference type="ChEBI" id="CHEBI:57305"/>
        <dbReference type="ChEBI" id="CHEBI:83099"/>
        <dbReference type="ChEBI" id="CHEBI:83143"/>
        <dbReference type="EC" id="1.4.4.2"/>
    </reaction>
</comment>
<comment type="cofactor">
    <cofactor evidence="1">
        <name>pyridoxal 5'-phosphate</name>
        <dbReference type="ChEBI" id="CHEBI:597326"/>
    </cofactor>
</comment>
<comment type="activity regulation">
    <text evidence="1">Stimulated by lipoic acid. Inhibited in presence of methylamine (By similarity).</text>
</comment>
<comment type="subunit">
    <text evidence="1">Interacts with GCSH (By similarity). Homodimer. The glycine cleavage system is composed of four proteins: P (GLDC), T (GCST), L (DLD) and H (GCSH) (By similarity).</text>
</comment>
<comment type="subcellular location">
    <subcellularLocation>
        <location evidence="1">Mitochondrion</location>
    </subcellularLocation>
</comment>
<comment type="similarity">
    <text evidence="5">Belongs to the GcvP family.</text>
</comment>
<organism>
    <name type="scientific">Mus musculus</name>
    <name type="common">Mouse</name>
    <dbReference type="NCBI Taxonomy" id="10090"/>
    <lineage>
        <taxon>Eukaryota</taxon>
        <taxon>Metazoa</taxon>
        <taxon>Chordata</taxon>
        <taxon>Craniata</taxon>
        <taxon>Vertebrata</taxon>
        <taxon>Euteleostomi</taxon>
        <taxon>Mammalia</taxon>
        <taxon>Eutheria</taxon>
        <taxon>Euarchontoglires</taxon>
        <taxon>Glires</taxon>
        <taxon>Rodentia</taxon>
        <taxon>Myomorpha</taxon>
        <taxon>Muroidea</taxon>
        <taxon>Muridae</taxon>
        <taxon>Murinae</taxon>
        <taxon>Mus</taxon>
        <taxon>Mus</taxon>
    </lineage>
</organism>
<feature type="transit peptide" description="Mitochondrion" evidence="3">
    <location>
        <begin position="1"/>
        <end position="35"/>
    </location>
</feature>
<feature type="chain" id="PRO_0000010741" description="Glycine dehydrogenase (decarboxylating), mitochondrial">
    <location>
        <begin position="36"/>
        <end position="1025"/>
    </location>
</feature>
<feature type="region of interest" description="Disordered" evidence="4">
    <location>
        <begin position="16"/>
        <end position="51"/>
    </location>
</feature>
<feature type="compositionally biased region" description="Gly residues" evidence="4">
    <location>
        <begin position="38"/>
        <end position="50"/>
    </location>
</feature>
<feature type="modified residue" description="N6-acetyllysine" evidence="7">
    <location>
        <position position="452"/>
    </location>
</feature>
<feature type="modified residue" description="N6-acetyllysine" evidence="7">
    <location>
        <position position="519"/>
    </location>
</feature>
<feature type="modified residue" description="N6-acetyllysine" evidence="7">
    <location>
        <position position="653"/>
    </location>
</feature>
<feature type="modified residue" description="N6-acetyllysine" evidence="7">
    <location>
        <position position="669"/>
    </location>
</feature>
<feature type="modified residue" description="N6-(pyridoxal phosphate)lysine" evidence="1">
    <location>
        <position position="759"/>
    </location>
</feature>
<proteinExistence type="evidence at protein level"/>
<protein>
    <recommendedName>
        <fullName evidence="5">Glycine dehydrogenase (decarboxylating), mitochondrial</fullName>
        <ecNumber evidence="2">1.4.4.2</ecNumber>
    </recommendedName>
    <alternativeName>
        <fullName>Glycine cleavage system P protein</fullName>
    </alternativeName>
    <alternativeName>
        <fullName evidence="2">Glycine decarboxylase</fullName>
    </alternativeName>
    <alternativeName>
        <fullName>Glycine dehydrogenase (aminomethyl-transferring)</fullName>
    </alternativeName>
</protein>
<dbReference type="EC" id="1.4.4.2" evidence="2"/>
<dbReference type="EMBL" id="BC017135">
    <property type="protein sequence ID" value="AAH17135.1"/>
    <property type="molecule type" value="mRNA"/>
</dbReference>
<dbReference type="CCDS" id="CCDS37956.1"/>
<dbReference type="RefSeq" id="NP_613061.1">
    <property type="nucleotide sequence ID" value="NM_138595.3"/>
</dbReference>
<dbReference type="SMR" id="Q91W43"/>
<dbReference type="BioGRID" id="222425">
    <property type="interactions" value="12"/>
</dbReference>
<dbReference type="FunCoup" id="Q91W43">
    <property type="interactions" value="797"/>
</dbReference>
<dbReference type="STRING" id="10090.ENSMUSP00000025778"/>
<dbReference type="GlyGen" id="Q91W43">
    <property type="glycosylation" value="3 sites, 1 N-linked glycan (1 site), 1 O-linked glycan (1 site)"/>
</dbReference>
<dbReference type="iPTMnet" id="Q91W43"/>
<dbReference type="PhosphoSitePlus" id="Q91W43"/>
<dbReference type="SwissPalm" id="Q91W43"/>
<dbReference type="jPOST" id="Q91W43"/>
<dbReference type="PaxDb" id="10090-ENSMUSP00000025778"/>
<dbReference type="PeptideAtlas" id="Q91W43"/>
<dbReference type="ProteomicsDB" id="271204"/>
<dbReference type="Antibodypedia" id="9715">
    <property type="antibodies" value="198 antibodies from 31 providers"/>
</dbReference>
<dbReference type="DNASU" id="104174"/>
<dbReference type="Ensembl" id="ENSMUST00000025778.9">
    <property type="protein sequence ID" value="ENSMUSP00000025778.8"/>
    <property type="gene ID" value="ENSMUSG00000024827.11"/>
</dbReference>
<dbReference type="GeneID" id="104174"/>
<dbReference type="KEGG" id="mmu:104174"/>
<dbReference type="UCSC" id="uc008hej.2">
    <property type="organism name" value="mouse"/>
</dbReference>
<dbReference type="AGR" id="MGI:1341155"/>
<dbReference type="CTD" id="2731"/>
<dbReference type="MGI" id="MGI:1341155">
    <property type="gene designation" value="Gldc"/>
</dbReference>
<dbReference type="VEuPathDB" id="HostDB:ENSMUSG00000024827"/>
<dbReference type="eggNOG" id="KOG2040">
    <property type="taxonomic scope" value="Eukaryota"/>
</dbReference>
<dbReference type="GeneTree" id="ENSGT00390000017970"/>
<dbReference type="HOGENOM" id="CLU_004620_3_2_1"/>
<dbReference type="InParanoid" id="Q91W43"/>
<dbReference type="OMA" id="RNLICTC"/>
<dbReference type="OrthoDB" id="6537869at2759"/>
<dbReference type="PhylomeDB" id="Q91W43"/>
<dbReference type="TreeFam" id="TF300678"/>
<dbReference type="BRENDA" id="1.4.1.27">
    <property type="organism ID" value="3474"/>
</dbReference>
<dbReference type="Reactome" id="R-MMU-6783984">
    <property type="pathway name" value="Glycine degradation"/>
</dbReference>
<dbReference type="BioGRID-ORCS" id="104174">
    <property type="hits" value="1 hit in 80 CRISPR screens"/>
</dbReference>
<dbReference type="ChiTaRS" id="Gldc">
    <property type="organism name" value="mouse"/>
</dbReference>
<dbReference type="PRO" id="PR:Q91W43"/>
<dbReference type="Proteomes" id="UP000000589">
    <property type="component" value="Chromosome 19"/>
</dbReference>
<dbReference type="RNAct" id="Q91W43">
    <property type="molecule type" value="protein"/>
</dbReference>
<dbReference type="Bgee" id="ENSMUSG00000024827">
    <property type="expression patterns" value="Expressed in otic placode and 150 other cell types or tissues"/>
</dbReference>
<dbReference type="GO" id="GO:0005960">
    <property type="term" value="C:glycine cleavage complex"/>
    <property type="evidence" value="ECO:0007669"/>
    <property type="project" value="Ensembl"/>
</dbReference>
<dbReference type="GO" id="GO:0005739">
    <property type="term" value="C:mitochondrion"/>
    <property type="evidence" value="ECO:0007005"/>
    <property type="project" value="MGI"/>
</dbReference>
<dbReference type="GO" id="GO:0005654">
    <property type="term" value="C:nucleoplasm"/>
    <property type="evidence" value="ECO:0007669"/>
    <property type="project" value="Ensembl"/>
</dbReference>
<dbReference type="GO" id="GO:0005886">
    <property type="term" value="C:plasma membrane"/>
    <property type="evidence" value="ECO:0007669"/>
    <property type="project" value="Ensembl"/>
</dbReference>
<dbReference type="GO" id="GO:0019899">
    <property type="term" value="F:enzyme binding"/>
    <property type="evidence" value="ECO:0007669"/>
    <property type="project" value="Ensembl"/>
</dbReference>
<dbReference type="GO" id="GO:0016594">
    <property type="term" value="F:glycine binding"/>
    <property type="evidence" value="ECO:0007669"/>
    <property type="project" value="Ensembl"/>
</dbReference>
<dbReference type="GO" id="GO:0004375">
    <property type="term" value="F:glycine dehydrogenase (decarboxylating) activity"/>
    <property type="evidence" value="ECO:0000250"/>
    <property type="project" value="UniProtKB"/>
</dbReference>
<dbReference type="GO" id="GO:0016829">
    <property type="term" value="F:lyase activity"/>
    <property type="evidence" value="ECO:0007669"/>
    <property type="project" value="InterPro"/>
</dbReference>
<dbReference type="GO" id="GO:0042803">
    <property type="term" value="F:protein homodimerization activity"/>
    <property type="evidence" value="ECO:0000250"/>
    <property type="project" value="UniProtKB"/>
</dbReference>
<dbReference type="GO" id="GO:0070280">
    <property type="term" value="F:pyridoxal binding"/>
    <property type="evidence" value="ECO:0000250"/>
    <property type="project" value="UniProtKB"/>
</dbReference>
<dbReference type="GO" id="GO:0030170">
    <property type="term" value="F:pyridoxal phosphate binding"/>
    <property type="evidence" value="ECO:0007669"/>
    <property type="project" value="Ensembl"/>
</dbReference>
<dbReference type="GO" id="GO:1990830">
    <property type="term" value="P:cellular response to leukemia inhibitory factor"/>
    <property type="evidence" value="ECO:0000270"/>
    <property type="project" value="MGI"/>
</dbReference>
<dbReference type="GO" id="GO:0006546">
    <property type="term" value="P:glycine catabolic process"/>
    <property type="evidence" value="ECO:0000250"/>
    <property type="project" value="UniProtKB"/>
</dbReference>
<dbReference type="GO" id="GO:0019464">
    <property type="term" value="P:glycine decarboxylation via glycine cleavage system"/>
    <property type="evidence" value="ECO:0000266"/>
    <property type="project" value="MGI"/>
</dbReference>
<dbReference type="GO" id="GO:0065003">
    <property type="term" value="P:protein-containing complex assembly"/>
    <property type="evidence" value="ECO:0007669"/>
    <property type="project" value="Ensembl"/>
</dbReference>
<dbReference type="GO" id="GO:1903442">
    <property type="term" value="P:response to lipoic acid"/>
    <property type="evidence" value="ECO:0000250"/>
    <property type="project" value="UniProtKB"/>
</dbReference>
<dbReference type="GO" id="GO:0036255">
    <property type="term" value="P:response to methylamine"/>
    <property type="evidence" value="ECO:0000250"/>
    <property type="project" value="UniProtKB"/>
</dbReference>
<dbReference type="CDD" id="cd00613">
    <property type="entry name" value="GDC-P"/>
    <property type="match status" value="2"/>
</dbReference>
<dbReference type="FunFam" id="3.90.1150.10:FF:000025">
    <property type="entry name" value="Glycine cleavage system P protein"/>
    <property type="match status" value="1"/>
</dbReference>
<dbReference type="FunFam" id="3.90.1150.10:FF:000153">
    <property type="entry name" value="Glycine dehydrogenase (decarboxylating)"/>
    <property type="match status" value="1"/>
</dbReference>
<dbReference type="FunFam" id="3.40.640.10:FF:000007">
    <property type="entry name" value="glycine dehydrogenase (Decarboxylating), mitochondrial"/>
    <property type="match status" value="1"/>
</dbReference>
<dbReference type="FunFam" id="3.40.640.10:FF:000199">
    <property type="entry name" value="Glycine dehydrogenase [decarboxylating], mitochondrial"/>
    <property type="match status" value="1"/>
</dbReference>
<dbReference type="FunFam" id="3.40.640.10:FF:000225">
    <property type="entry name" value="Glycine dehydrogenase [decarboxylating], mitochondrial"/>
    <property type="match status" value="1"/>
</dbReference>
<dbReference type="Gene3D" id="3.90.1150.10">
    <property type="entry name" value="Aspartate Aminotransferase, domain 1"/>
    <property type="match status" value="2"/>
</dbReference>
<dbReference type="Gene3D" id="3.40.640.10">
    <property type="entry name" value="Type I PLP-dependent aspartate aminotransferase-like (Major domain)"/>
    <property type="match status" value="2"/>
</dbReference>
<dbReference type="HAMAP" id="MF_00711">
    <property type="entry name" value="GcvP"/>
    <property type="match status" value="1"/>
</dbReference>
<dbReference type="InterPro" id="IPR001597">
    <property type="entry name" value="ArAA_b-elim_lyase/Thr_aldolase"/>
</dbReference>
<dbReference type="InterPro" id="IPR003437">
    <property type="entry name" value="GcvP"/>
</dbReference>
<dbReference type="InterPro" id="IPR049316">
    <property type="entry name" value="GDC-P_C"/>
</dbReference>
<dbReference type="InterPro" id="IPR049315">
    <property type="entry name" value="GDC-P_N"/>
</dbReference>
<dbReference type="InterPro" id="IPR020581">
    <property type="entry name" value="GDC_P"/>
</dbReference>
<dbReference type="InterPro" id="IPR015424">
    <property type="entry name" value="PyrdxlP-dep_Trfase"/>
</dbReference>
<dbReference type="InterPro" id="IPR015421">
    <property type="entry name" value="PyrdxlP-dep_Trfase_major"/>
</dbReference>
<dbReference type="InterPro" id="IPR015422">
    <property type="entry name" value="PyrdxlP-dep_Trfase_small"/>
</dbReference>
<dbReference type="NCBIfam" id="TIGR00461">
    <property type="entry name" value="gcvP"/>
    <property type="match status" value="1"/>
</dbReference>
<dbReference type="NCBIfam" id="NF001696">
    <property type="entry name" value="PRK00451.1"/>
    <property type="match status" value="1"/>
</dbReference>
<dbReference type="NCBIfam" id="NF003346">
    <property type="entry name" value="PRK04366.1"/>
    <property type="match status" value="1"/>
</dbReference>
<dbReference type="PANTHER" id="PTHR11773:SF1">
    <property type="entry name" value="GLYCINE DEHYDROGENASE (DECARBOXYLATING), MITOCHONDRIAL"/>
    <property type="match status" value="1"/>
</dbReference>
<dbReference type="PANTHER" id="PTHR11773">
    <property type="entry name" value="GLYCINE DEHYDROGENASE, DECARBOXYLATING"/>
    <property type="match status" value="1"/>
</dbReference>
<dbReference type="Pfam" id="PF01212">
    <property type="entry name" value="Beta_elim_lyase"/>
    <property type="match status" value="1"/>
</dbReference>
<dbReference type="Pfam" id="PF21478">
    <property type="entry name" value="GcvP2_C"/>
    <property type="match status" value="1"/>
</dbReference>
<dbReference type="Pfam" id="PF02347">
    <property type="entry name" value="GDC-P"/>
    <property type="match status" value="1"/>
</dbReference>
<dbReference type="SUPFAM" id="SSF53383">
    <property type="entry name" value="PLP-dependent transferases"/>
    <property type="match status" value="2"/>
</dbReference>
<sequence>MQLCARAWGLRLGRGAGGGHRLARGTGLSWAQRSRDSSGGGGGGGGGDRGAAGASRLLERLLPRHDDFSRRHIGPGDKDRREMLQALGLASIDELIEKTVPASIRLKRPLKMEDPICENEILETLHAIASKNQIWRSYIGMGYYNCSVPQTILRNLLENSGWVTQYTPYQPEVSQGRLESLLNYQTMVSDITGLDMANASLLDEATAAAEAMQLCHRHNKRKKFFVDPRCHPQTIAVVQTRAKYRGVLVELKLPHEMDFSGKDVCGVLFQYPDTEGKVEDFTELVDRAHQTGSLTCCATDLLALCILRPPGEFGVDIALGNSQRFGVPLGYGGPHAAFFAVKENLVRMMPGRMVGVTRDATGKEVYRLALQTREQHIRRDKATSNICTAQALLANMAAMFAIYHGSQGLKHIAKRVHNATLILSEGLKRAGHQLQHDLFFDTLKVQCGCSVKEVLGRAAQRQINFRLFDDGTLGISLDETVTEKDLDDLLWIFGCESSAELVAEGMGEERRGLLGSSFKRTSPFLTHQVFNSYHSETNLVRYMKKLENKDISLVHSMIPLGSCTMKLNSSSELAPITWREFANIHPFVPLDQAQGYQQLFQGLEKDLCEITGYDRVSFQPNSGAQGEYAGLATIRAYLDQKGERHRTVCLIPKSAHGTNPASAHMAGMKIQPVEVDRYGNIDVAHLKAMVDQHKENLAAIMITYPSTNGVFEENIGDVCALIHQHGGQVYLDGANMNAQVGICRPGDFGSDVSHLNLHKTFCIPHGGGGPGMGPIGVKKHLSPFLPSHPVISIKPTEGTWPVGTVSAAPWGSSSILPISWAYIKMMGGKGLKEATEIAILNANYMAKRLEKHYRVLFRGARGYVAHEFILDTRPFKKSANVEAVDVAKRLQDYGFHAPTMSWPVAGTLMIEPTESEDKAELDRFCDAMISIRQEIADIEEGRIDPRVNPLKMSPHSLTCVTSSCWDRPYSREVAAFPLPFVKPENKFWPTIARIDDIYGDQHLVCTCPPMEVYESPFSEQKRASS</sequence>
<accession>Q91W43</accession>
<keyword id="KW-0007">Acetylation</keyword>
<keyword id="KW-0903">Direct protein sequencing</keyword>
<keyword id="KW-0496">Mitochondrion</keyword>
<keyword id="KW-0560">Oxidoreductase</keyword>
<keyword id="KW-0663">Pyridoxal phosphate</keyword>
<keyword id="KW-1185">Reference proteome</keyword>
<keyword id="KW-0809">Transit peptide</keyword>